<reference key="1">
    <citation type="journal article" date="2009" name="PLoS Genet.">
        <title>Organised genome dynamics in the Escherichia coli species results in highly diverse adaptive paths.</title>
        <authorList>
            <person name="Touchon M."/>
            <person name="Hoede C."/>
            <person name="Tenaillon O."/>
            <person name="Barbe V."/>
            <person name="Baeriswyl S."/>
            <person name="Bidet P."/>
            <person name="Bingen E."/>
            <person name="Bonacorsi S."/>
            <person name="Bouchier C."/>
            <person name="Bouvet O."/>
            <person name="Calteau A."/>
            <person name="Chiapello H."/>
            <person name="Clermont O."/>
            <person name="Cruveiller S."/>
            <person name="Danchin A."/>
            <person name="Diard M."/>
            <person name="Dossat C."/>
            <person name="Karoui M.E."/>
            <person name="Frapy E."/>
            <person name="Garry L."/>
            <person name="Ghigo J.M."/>
            <person name="Gilles A.M."/>
            <person name="Johnson J."/>
            <person name="Le Bouguenec C."/>
            <person name="Lescat M."/>
            <person name="Mangenot S."/>
            <person name="Martinez-Jehanne V."/>
            <person name="Matic I."/>
            <person name="Nassif X."/>
            <person name="Oztas S."/>
            <person name="Petit M.A."/>
            <person name="Pichon C."/>
            <person name="Rouy Z."/>
            <person name="Ruf C.S."/>
            <person name="Schneider D."/>
            <person name="Tourret J."/>
            <person name="Vacherie B."/>
            <person name="Vallenet D."/>
            <person name="Medigue C."/>
            <person name="Rocha E.P.C."/>
            <person name="Denamur E."/>
        </authorList>
    </citation>
    <scope>NUCLEOTIDE SEQUENCE [LARGE SCALE GENOMIC DNA]</scope>
    <source>
        <strain>UMN026 / ExPEC</strain>
    </source>
</reference>
<comment type="function">
    <text evidence="1">Catalyzes the transfer of succinyl-CoA to arginine to produce N(2)-succinylarginine.</text>
</comment>
<comment type="catalytic activity">
    <reaction evidence="1">
        <text>succinyl-CoA + L-arginine = N(2)-succinyl-L-arginine + CoA + H(+)</text>
        <dbReference type="Rhea" id="RHEA:15185"/>
        <dbReference type="ChEBI" id="CHEBI:15378"/>
        <dbReference type="ChEBI" id="CHEBI:32682"/>
        <dbReference type="ChEBI" id="CHEBI:57287"/>
        <dbReference type="ChEBI" id="CHEBI:57292"/>
        <dbReference type="ChEBI" id="CHEBI:58241"/>
        <dbReference type="EC" id="2.3.1.109"/>
    </reaction>
</comment>
<comment type="pathway">
    <text evidence="1">Amino-acid degradation; L-arginine degradation via AST pathway; L-glutamate and succinate from L-arginine: step 1/5.</text>
</comment>
<comment type="similarity">
    <text evidence="1">Belongs to the arginine N-succinyltransferase family.</text>
</comment>
<sequence>MMVIRPVERSDVSALMQLASKTGGGLTSLPANEATLSARIERAIKTWQGELPKSEQGYVFVLEDSETGTVAGICAIEVAVGLNDPWYNYRVGTLVHASKELNVYNALPTLFLSNDHTGSSELCTLFLDPEWRKEGNGYLLSKSRFMFMAAFRDKFNDKVVAEMRGVIDEHGYSPFWQSLGKRFFSMDFSRADFLCGTGQKAFIAELMPKHPIYTHFLSQEAQDVIGQVHPQTAPARAVLEKEGFRYRNYIDIFDGGPTLECDIDRVRAIRKSRLVEVAEGQPAQGDFPACLVANENYHHFRVVLVRTDPATERLILTAAQLDALKCHAGDRVRLVRLCAEEKTA</sequence>
<organism>
    <name type="scientific">Escherichia coli O17:K52:H18 (strain UMN026 / ExPEC)</name>
    <dbReference type="NCBI Taxonomy" id="585056"/>
    <lineage>
        <taxon>Bacteria</taxon>
        <taxon>Pseudomonadati</taxon>
        <taxon>Pseudomonadota</taxon>
        <taxon>Gammaproteobacteria</taxon>
        <taxon>Enterobacterales</taxon>
        <taxon>Enterobacteriaceae</taxon>
        <taxon>Escherichia</taxon>
    </lineage>
</organism>
<evidence type="ECO:0000255" key="1">
    <source>
        <dbReference type="HAMAP-Rule" id="MF_01171"/>
    </source>
</evidence>
<accession>B7N583</accession>
<gene>
    <name evidence="1" type="primary">astA</name>
    <name type="ordered locus">ECUMN_2036</name>
</gene>
<proteinExistence type="inferred from homology"/>
<feature type="chain" id="PRO_1000137980" description="Arginine N-succinyltransferase">
    <location>
        <begin position="1"/>
        <end position="344"/>
    </location>
</feature>
<feature type="active site" description="Proton donor" evidence="1">
    <location>
        <position position="229"/>
    </location>
</feature>
<feature type="binding site" evidence="1">
    <location>
        <position position="125"/>
    </location>
    <ligand>
        <name>succinyl-CoA</name>
        <dbReference type="ChEBI" id="CHEBI:57292"/>
    </ligand>
</feature>
<dbReference type="EC" id="2.3.1.109" evidence="1"/>
<dbReference type="EMBL" id="CU928163">
    <property type="protein sequence ID" value="CAR13232.1"/>
    <property type="molecule type" value="Genomic_DNA"/>
</dbReference>
<dbReference type="RefSeq" id="WP_000989429.1">
    <property type="nucleotide sequence ID" value="NC_011751.1"/>
</dbReference>
<dbReference type="RefSeq" id="YP_002412764.1">
    <property type="nucleotide sequence ID" value="NC_011751.1"/>
</dbReference>
<dbReference type="SMR" id="B7N583"/>
<dbReference type="STRING" id="585056.ECUMN_2036"/>
<dbReference type="KEGG" id="eum:ECUMN_2036"/>
<dbReference type="PATRIC" id="fig|585056.7.peg.2222"/>
<dbReference type="HOGENOM" id="CLU_057655_0_0_6"/>
<dbReference type="UniPathway" id="UPA00185">
    <property type="reaction ID" value="UER00279"/>
</dbReference>
<dbReference type="Proteomes" id="UP000007097">
    <property type="component" value="Chromosome"/>
</dbReference>
<dbReference type="GO" id="GO:0008791">
    <property type="term" value="F:arginine N-succinyltransferase activity"/>
    <property type="evidence" value="ECO:0007669"/>
    <property type="project" value="UniProtKB-UniRule"/>
</dbReference>
<dbReference type="GO" id="GO:0019544">
    <property type="term" value="P:arginine catabolic process to glutamate"/>
    <property type="evidence" value="ECO:0007669"/>
    <property type="project" value="UniProtKB-UniRule"/>
</dbReference>
<dbReference type="GO" id="GO:0019545">
    <property type="term" value="P:arginine catabolic process to succinate"/>
    <property type="evidence" value="ECO:0007669"/>
    <property type="project" value="UniProtKB-UniRule"/>
</dbReference>
<dbReference type="Gene3D" id="2.40.40.20">
    <property type="match status" value="1"/>
</dbReference>
<dbReference type="Gene3D" id="3.40.630.30">
    <property type="match status" value="1"/>
</dbReference>
<dbReference type="HAMAP" id="MF_01171">
    <property type="entry name" value="AstA"/>
    <property type="match status" value="1"/>
</dbReference>
<dbReference type="InterPro" id="IPR016181">
    <property type="entry name" value="Acyl_CoA_acyltransferase"/>
</dbReference>
<dbReference type="InterPro" id="IPR007041">
    <property type="entry name" value="Arg_succinylTrfase_AstA/AruG"/>
</dbReference>
<dbReference type="InterPro" id="IPR017650">
    <property type="entry name" value="Arginine_N-succinylTrfase"/>
</dbReference>
<dbReference type="NCBIfam" id="TIGR03243">
    <property type="entry name" value="arg_catab_AOST"/>
    <property type="match status" value="1"/>
</dbReference>
<dbReference type="NCBIfam" id="TIGR03244">
    <property type="entry name" value="arg_catab_AstA"/>
    <property type="match status" value="1"/>
</dbReference>
<dbReference type="NCBIfam" id="NF007770">
    <property type="entry name" value="PRK10456.1"/>
    <property type="match status" value="1"/>
</dbReference>
<dbReference type="PANTHER" id="PTHR30420:SF1">
    <property type="entry name" value="ARGININE N-SUCCINYLTRANSFERASE"/>
    <property type="match status" value="1"/>
</dbReference>
<dbReference type="PANTHER" id="PTHR30420">
    <property type="entry name" value="N-SUCCINYLARGININE DIHYDROLASE"/>
    <property type="match status" value="1"/>
</dbReference>
<dbReference type="Pfam" id="PF04958">
    <property type="entry name" value="AstA"/>
    <property type="match status" value="1"/>
</dbReference>
<dbReference type="SUPFAM" id="SSF55729">
    <property type="entry name" value="Acyl-CoA N-acyltransferases (Nat)"/>
    <property type="match status" value="1"/>
</dbReference>
<keyword id="KW-0012">Acyltransferase</keyword>
<keyword id="KW-0056">Arginine metabolism</keyword>
<keyword id="KW-0808">Transferase</keyword>
<name>ASTA_ECOLU</name>
<protein>
    <recommendedName>
        <fullName evidence="1">Arginine N-succinyltransferase</fullName>
        <shortName evidence="1">AST</shortName>
        <ecNumber evidence="1">2.3.1.109</ecNumber>
    </recommendedName>
    <alternativeName>
        <fullName evidence="1">AOST</fullName>
    </alternativeName>
</protein>